<keyword id="KW-0903">Direct protein sequencing</keyword>
<organism>
    <name type="scientific">Capsicum chinense</name>
    <name type="common">Scotch bonnet</name>
    <name type="synonym">Bonnet pepper</name>
    <dbReference type="NCBI Taxonomy" id="80379"/>
    <lineage>
        <taxon>Eukaryota</taxon>
        <taxon>Viridiplantae</taxon>
        <taxon>Streptophyta</taxon>
        <taxon>Embryophyta</taxon>
        <taxon>Tracheophyta</taxon>
        <taxon>Spermatophyta</taxon>
        <taxon>Magnoliopsida</taxon>
        <taxon>eudicotyledons</taxon>
        <taxon>Gunneridae</taxon>
        <taxon>Pentapetalae</taxon>
        <taxon>asterids</taxon>
        <taxon>lamiids</taxon>
        <taxon>Solanales</taxon>
        <taxon>Solanaceae</taxon>
        <taxon>Solanoideae</taxon>
        <taxon>Capsiceae</taxon>
        <taxon>Capsicum</taxon>
    </lineage>
</organism>
<name>UP01_CAPCH</name>
<reference evidence="1" key="1">
    <citation type="submission" date="2008-07" db="UniProtKB">
        <authorList>
            <person name="Sabater Jara A.B."/>
            <person name="Almagro L."/>
            <person name="Pedreno M.A."/>
        </authorList>
    </citation>
    <scope>PROTEIN SEQUENCE</scope>
</reference>
<evidence type="ECO:0000305" key="1"/>
<proteinExistence type="evidence at protein level"/>
<accession>P86083</accession>
<protein>
    <recommendedName>
        <fullName>Unknown protein 1</fullName>
    </recommendedName>
</protein>
<feature type="chain" id="PRO_0000355604" description="Unknown protein 1">
    <location>
        <begin position="1" status="less than"/>
        <end position="10" status="greater than"/>
    </location>
</feature>
<feature type="unsure residue" description="I or L">
    <location>
        <position position="2"/>
    </location>
</feature>
<feature type="unsure residue" description="Q or K">
    <location>
        <position position="3"/>
    </location>
</feature>
<feature type="non-terminal residue">
    <location>
        <position position="1"/>
    </location>
</feature>
<feature type="non-terminal residue">
    <location>
        <position position="10"/>
    </location>
</feature>
<sequence length="10" mass="1157">YIQGYSGDVR</sequence>